<protein>
    <recommendedName>
        <fullName>Threonine synthase</fullName>
        <shortName>TS</shortName>
        <ecNumber>4.2.3.1</ecNumber>
    </recommendedName>
</protein>
<name>THRC_HALH5</name>
<organism>
    <name type="scientific">Halalkalibacterium halodurans (strain ATCC BAA-125 / DSM 18197 / FERM 7344 / JCM 9153 / C-125)</name>
    <name type="common">Bacillus halodurans</name>
    <dbReference type="NCBI Taxonomy" id="272558"/>
    <lineage>
        <taxon>Bacteria</taxon>
        <taxon>Bacillati</taxon>
        <taxon>Bacillota</taxon>
        <taxon>Bacilli</taxon>
        <taxon>Bacillales</taxon>
        <taxon>Bacillaceae</taxon>
        <taxon>Halalkalibacterium (ex Joshi et al. 2022)</taxon>
    </lineage>
</organism>
<dbReference type="EC" id="4.2.3.1"/>
<dbReference type="EMBL" id="BA000004">
    <property type="protein sequence ID" value="BAB07140.1"/>
    <property type="molecule type" value="Genomic_DNA"/>
</dbReference>
<dbReference type="PIR" id="E84077">
    <property type="entry name" value="E84077"/>
</dbReference>
<dbReference type="RefSeq" id="WP_010899559.1">
    <property type="nucleotide sequence ID" value="NC_002570.2"/>
</dbReference>
<dbReference type="SMR" id="Q9K7E3"/>
<dbReference type="STRING" id="272558.gene:10729334"/>
<dbReference type="KEGG" id="bha:BH3421"/>
<dbReference type="eggNOG" id="COG0498">
    <property type="taxonomic scope" value="Bacteria"/>
</dbReference>
<dbReference type="HOGENOM" id="CLU_028142_0_0_9"/>
<dbReference type="OrthoDB" id="9778118at2"/>
<dbReference type="UniPathway" id="UPA00050">
    <property type="reaction ID" value="UER00065"/>
</dbReference>
<dbReference type="Proteomes" id="UP000001258">
    <property type="component" value="Chromosome"/>
</dbReference>
<dbReference type="GO" id="GO:0003941">
    <property type="term" value="F:L-serine ammonia-lyase activity"/>
    <property type="evidence" value="ECO:0007669"/>
    <property type="project" value="TreeGrafter"/>
</dbReference>
<dbReference type="GO" id="GO:0030170">
    <property type="term" value="F:pyridoxal phosphate binding"/>
    <property type="evidence" value="ECO:0007669"/>
    <property type="project" value="InterPro"/>
</dbReference>
<dbReference type="GO" id="GO:0004794">
    <property type="term" value="F:threonine deaminase activity"/>
    <property type="evidence" value="ECO:0007669"/>
    <property type="project" value="TreeGrafter"/>
</dbReference>
<dbReference type="GO" id="GO:0004795">
    <property type="term" value="F:threonine synthase activity"/>
    <property type="evidence" value="ECO:0007669"/>
    <property type="project" value="UniProtKB-EC"/>
</dbReference>
<dbReference type="GO" id="GO:0009097">
    <property type="term" value="P:isoleucine biosynthetic process"/>
    <property type="evidence" value="ECO:0007669"/>
    <property type="project" value="TreeGrafter"/>
</dbReference>
<dbReference type="GO" id="GO:0006565">
    <property type="term" value="P:L-serine catabolic process"/>
    <property type="evidence" value="ECO:0007669"/>
    <property type="project" value="TreeGrafter"/>
</dbReference>
<dbReference type="GO" id="GO:0009088">
    <property type="term" value="P:threonine biosynthetic process"/>
    <property type="evidence" value="ECO:0007669"/>
    <property type="project" value="UniProtKB-UniPathway"/>
</dbReference>
<dbReference type="GO" id="GO:0006567">
    <property type="term" value="P:threonine catabolic process"/>
    <property type="evidence" value="ECO:0007669"/>
    <property type="project" value="TreeGrafter"/>
</dbReference>
<dbReference type="CDD" id="cd01563">
    <property type="entry name" value="Thr-synth_1"/>
    <property type="match status" value="1"/>
</dbReference>
<dbReference type="FunFam" id="3.40.50.1100:FF:000014">
    <property type="entry name" value="Threonine synthase"/>
    <property type="match status" value="1"/>
</dbReference>
<dbReference type="Gene3D" id="3.40.50.1100">
    <property type="match status" value="2"/>
</dbReference>
<dbReference type="InterPro" id="IPR050147">
    <property type="entry name" value="Ser/Thr_Dehydratase"/>
</dbReference>
<dbReference type="InterPro" id="IPR000634">
    <property type="entry name" value="Ser/Thr_deHydtase_PyrdxlP-BS"/>
</dbReference>
<dbReference type="InterPro" id="IPR004450">
    <property type="entry name" value="Thr_synthase-like"/>
</dbReference>
<dbReference type="InterPro" id="IPR026260">
    <property type="entry name" value="Thr_Synthase_bac/arc"/>
</dbReference>
<dbReference type="InterPro" id="IPR001926">
    <property type="entry name" value="TrpB-like_PALP"/>
</dbReference>
<dbReference type="InterPro" id="IPR036052">
    <property type="entry name" value="TrpB-like_PALP_sf"/>
</dbReference>
<dbReference type="NCBIfam" id="TIGR00260">
    <property type="entry name" value="thrC"/>
    <property type="match status" value="1"/>
</dbReference>
<dbReference type="PANTHER" id="PTHR48078:SF6">
    <property type="entry name" value="L-THREONINE DEHYDRATASE CATABOLIC TDCB"/>
    <property type="match status" value="1"/>
</dbReference>
<dbReference type="PANTHER" id="PTHR48078">
    <property type="entry name" value="THREONINE DEHYDRATASE, MITOCHONDRIAL-RELATED"/>
    <property type="match status" value="1"/>
</dbReference>
<dbReference type="Pfam" id="PF00291">
    <property type="entry name" value="PALP"/>
    <property type="match status" value="1"/>
</dbReference>
<dbReference type="PIRSF" id="PIRSF038945">
    <property type="entry name" value="Thr_synthase"/>
    <property type="match status" value="1"/>
</dbReference>
<dbReference type="SUPFAM" id="SSF53686">
    <property type="entry name" value="Tryptophan synthase beta subunit-like PLP-dependent enzymes"/>
    <property type="match status" value="1"/>
</dbReference>
<dbReference type="PROSITE" id="PS00165">
    <property type="entry name" value="DEHYDRATASE_SER_THR"/>
    <property type="match status" value="1"/>
</dbReference>
<accession>Q9K7E3</accession>
<keyword id="KW-0028">Amino-acid biosynthesis</keyword>
<keyword id="KW-0456">Lyase</keyword>
<keyword id="KW-0663">Pyridoxal phosphate</keyword>
<keyword id="KW-1185">Reference proteome</keyword>
<keyword id="KW-0791">Threonine biosynthesis</keyword>
<proteinExistence type="inferred from homology"/>
<gene>
    <name type="primary">thrC</name>
    <name type="ordered locus">BH3421</name>
</gene>
<reference key="1">
    <citation type="journal article" date="2000" name="Nucleic Acids Res.">
        <title>Complete genome sequence of the alkaliphilic bacterium Bacillus halodurans and genomic sequence comparison with Bacillus subtilis.</title>
        <authorList>
            <person name="Takami H."/>
            <person name="Nakasone K."/>
            <person name="Takaki Y."/>
            <person name="Maeno G."/>
            <person name="Sasaki R."/>
            <person name="Masui N."/>
            <person name="Fuji F."/>
            <person name="Hirama C."/>
            <person name="Nakamura Y."/>
            <person name="Ogasawara N."/>
            <person name="Kuhara S."/>
            <person name="Horikoshi K."/>
        </authorList>
    </citation>
    <scope>NUCLEOTIDE SEQUENCE [LARGE SCALE GENOMIC DNA]</scope>
    <source>
        <strain>ATCC BAA-125 / DSM 18197 / FERM 7344 / JCM 9153 / C-125</strain>
    </source>
</reference>
<sequence length="354" mass="37665">MSQWRGLLQEYKEFLPVTEETPLLTLGEGNTPLIPLENLSKEWGVKAYVKYEGANPTGSFKDRGMVMAVAKAKEEGSRTIICASTGNTSAAAAAYGARAGLRCIVVIPEGKIALGKLAQAVMYGAEVLEIKGNFDHALDIVRSISEKEPITLVNSVNPYRIEGQKTSAFEICDALGQAPDVLAIPVGNAGNITAYWKGFKEYHEKKGTGLPQMRGFEAEGAAAIVRNQVIEEPETIATAIRIGNPASWTYAVEAAAESNGKIDEVTDEEILAAYQLLAQKEGVFAEPASCASIAGLRKQIASGEIKKGSTVVCVLTGNGLKDPNTAMSTIDVNPAVLPNDEQAFLDHIKGGVPK</sequence>
<comment type="function">
    <text evidence="1">Catalyzes the gamma-elimination of phosphate from L-phosphohomoserine and the beta-addition of water to produce L-threonine.</text>
</comment>
<comment type="catalytic activity">
    <reaction>
        <text>O-phospho-L-homoserine + H2O = L-threonine + phosphate</text>
        <dbReference type="Rhea" id="RHEA:10840"/>
        <dbReference type="ChEBI" id="CHEBI:15377"/>
        <dbReference type="ChEBI" id="CHEBI:43474"/>
        <dbReference type="ChEBI" id="CHEBI:57590"/>
        <dbReference type="ChEBI" id="CHEBI:57926"/>
        <dbReference type="EC" id="4.2.3.1"/>
    </reaction>
</comment>
<comment type="cofactor">
    <cofactor evidence="1">
        <name>pyridoxal 5'-phosphate</name>
        <dbReference type="ChEBI" id="CHEBI:597326"/>
    </cofactor>
</comment>
<comment type="pathway">
    <text>Amino-acid biosynthesis; L-threonine biosynthesis; L-threonine from L-aspartate: step 5/5.</text>
</comment>
<comment type="similarity">
    <text evidence="2">Belongs to the threonine synthase family.</text>
</comment>
<evidence type="ECO:0000250" key="1"/>
<evidence type="ECO:0000305" key="2"/>
<feature type="chain" id="PRO_0000185624" description="Threonine synthase">
    <location>
        <begin position="1"/>
        <end position="354"/>
    </location>
</feature>
<feature type="binding site" evidence="1">
    <location>
        <position position="87"/>
    </location>
    <ligand>
        <name>pyridoxal 5'-phosphate</name>
        <dbReference type="ChEBI" id="CHEBI:597326"/>
    </ligand>
</feature>
<feature type="binding site" evidence="1">
    <location>
        <begin position="187"/>
        <end position="191"/>
    </location>
    <ligand>
        <name>pyridoxal 5'-phosphate</name>
        <dbReference type="ChEBI" id="CHEBI:597326"/>
    </ligand>
</feature>
<feature type="binding site" evidence="1">
    <location>
        <position position="316"/>
    </location>
    <ligand>
        <name>pyridoxal 5'-phosphate</name>
        <dbReference type="ChEBI" id="CHEBI:597326"/>
    </ligand>
</feature>
<feature type="modified residue" description="N6-(pyridoxal phosphate)lysine" evidence="1">
    <location>
        <position position="61"/>
    </location>
</feature>